<feature type="chain" id="PRO_0000377174" description="tRNA dimethylallyltransferase 1">
    <location>
        <begin position="1"/>
        <end position="301"/>
    </location>
</feature>
<feature type="region of interest" description="Interaction with substrate tRNA" evidence="1">
    <location>
        <begin position="35"/>
        <end position="38"/>
    </location>
</feature>
<feature type="binding site" evidence="1">
    <location>
        <begin position="10"/>
        <end position="17"/>
    </location>
    <ligand>
        <name>ATP</name>
        <dbReference type="ChEBI" id="CHEBI:30616"/>
    </ligand>
</feature>
<feature type="binding site" evidence="1">
    <location>
        <begin position="12"/>
        <end position="17"/>
    </location>
    <ligand>
        <name>substrate</name>
    </ligand>
</feature>
<feature type="site" description="Interaction with substrate tRNA" evidence="1">
    <location>
        <position position="100"/>
    </location>
</feature>
<reference key="1">
    <citation type="submission" date="2007-05" db="EMBL/GenBank/DDBJ databases">
        <title>Complete sequence of Geobacter uraniireducens Rf4.</title>
        <authorList>
            <consortium name="US DOE Joint Genome Institute"/>
            <person name="Copeland A."/>
            <person name="Lucas S."/>
            <person name="Lapidus A."/>
            <person name="Barry K."/>
            <person name="Detter J.C."/>
            <person name="Glavina del Rio T."/>
            <person name="Hammon N."/>
            <person name="Israni S."/>
            <person name="Dalin E."/>
            <person name="Tice H."/>
            <person name="Pitluck S."/>
            <person name="Chertkov O."/>
            <person name="Brettin T."/>
            <person name="Bruce D."/>
            <person name="Han C."/>
            <person name="Schmutz J."/>
            <person name="Larimer F."/>
            <person name="Land M."/>
            <person name="Hauser L."/>
            <person name="Kyrpides N."/>
            <person name="Mikhailova N."/>
            <person name="Shelobolina E."/>
            <person name="Aklujkar M."/>
            <person name="Lovley D."/>
            <person name="Richardson P."/>
        </authorList>
    </citation>
    <scope>NUCLEOTIDE SEQUENCE [LARGE SCALE GENOMIC DNA]</scope>
    <source>
        <strain>ATCC BAA-1134 / JCM 13001 / Rf4</strain>
    </source>
</reference>
<gene>
    <name evidence="1" type="primary">miaA1</name>
    <name type="ordered locus">Gura_1499</name>
</gene>
<accession>A5GE43</accession>
<sequence length="301" mass="34870">MSCNLLVILGPTASGKTQLGVELARRLSGEIISADSRQVYRGMDIGTGKDLAEYGDIPYHIIDIVDPGFEFNVFEFQRCFQRAFAHIVNRGRLPVMVGGTGMYLEAVLNRYRFVEVPENADLRRELSTFSDEELAERLKGANPRLHNTTDLLERGRLVRAIEIAEYEDSREPLPLPELAPLIFGIRWERPVLRQRITDRLKARLEQGMIDEIEQLHRSGIPYETLEFYGLEYRFVAKYLKGELNRNDMFQKLNSAIHDFAKRQDNWFRRMERHGTVIHWLEGDGDPLKEAQEILRLNAIPR</sequence>
<comment type="function">
    <text evidence="1">Catalyzes the transfer of a dimethylallyl group onto the adenine at position 37 in tRNAs that read codons beginning with uridine, leading to the formation of N6-(dimethylallyl)adenosine (i(6)A).</text>
</comment>
<comment type="catalytic activity">
    <reaction evidence="1">
        <text>adenosine(37) in tRNA + dimethylallyl diphosphate = N(6)-dimethylallyladenosine(37) in tRNA + diphosphate</text>
        <dbReference type="Rhea" id="RHEA:26482"/>
        <dbReference type="Rhea" id="RHEA-COMP:10162"/>
        <dbReference type="Rhea" id="RHEA-COMP:10375"/>
        <dbReference type="ChEBI" id="CHEBI:33019"/>
        <dbReference type="ChEBI" id="CHEBI:57623"/>
        <dbReference type="ChEBI" id="CHEBI:74411"/>
        <dbReference type="ChEBI" id="CHEBI:74415"/>
        <dbReference type="EC" id="2.5.1.75"/>
    </reaction>
</comment>
<comment type="cofactor">
    <cofactor evidence="1">
        <name>Mg(2+)</name>
        <dbReference type="ChEBI" id="CHEBI:18420"/>
    </cofactor>
</comment>
<comment type="subunit">
    <text evidence="1">Monomer.</text>
</comment>
<comment type="similarity">
    <text evidence="1">Belongs to the IPP transferase family.</text>
</comment>
<dbReference type="EC" id="2.5.1.75" evidence="1"/>
<dbReference type="EMBL" id="CP000698">
    <property type="protein sequence ID" value="ABQ25698.1"/>
    <property type="molecule type" value="Genomic_DNA"/>
</dbReference>
<dbReference type="RefSeq" id="WP_011938411.1">
    <property type="nucleotide sequence ID" value="NC_009483.1"/>
</dbReference>
<dbReference type="SMR" id="A5GE43"/>
<dbReference type="STRING" id="351605.Gura_1499"/>
<dbReference type="KEGG" id="gur:Gura_1499"/>
<dbReference type="HOGENOM" id="CLU_032616_0_1_7"/>
<dbReference type="OrthoDB" id="9776390at2"/>
<dbReference type="Proteomes" id="UP000006695">
    <property type="component" value="Chromosome"/>
</dbReference>
<dbReference type="GO" id="GO:0005524">
    <property type="term" value="F:ATP binding"/>
    <property type="evidence" value="ECO:0007669"/>
    <property type="project" value="UniProtKB-UniRule"/>
</dbReference>
<dbReference type="GO" id="GO:0052381">
    <property type="term" value="F:tRNA dimethylallyltransferase activity"/>
    <property type="evidence" value="ECO:0007669"/>
    <property type="project" value="UniProtKB-UniRule"/>
</dbReference>
<dbReference type="GO" id="GO:0006400">
    <property type="term" value="P:tRNA modification"/>
    <property type="evidence" value="ECO:0007669"/>
    <property type="project" value="TreeGrafter"/>
</dbReference>
<dbReference type="Gene3D" id="1.10.287.890">
    <property type="entry name" value="Crystal structure of tRNA isopentenylpyrophosphate transferase (bh2366) domain"/>
    <property type="match status" value="1"/>
</dbReference>
<dbReference type="Gene3D" id="3.40.50.300">
    <property type="entry name" value="P-loop containing nucleotide triphosphate hydrolases"/>
    <property type="match status" value="1"/>
</dbReference>
<dbReference type="HAMAP" id="MF_00185">
    <property type="entry name" value="IPP_trans"/>
    <property type="match status" value="1"/>
</dbReference>
<dbReference type="InterPro" id="IPR039657">
    <property type="entry name" value="Dimethylallyltransferase"/>
</dbReference>
<dbReference type="InterPro" id="IPR018022">
    <property type="entry name" value="IPT"/>
</dbReference>
<dbReference type="InterPro" id="IPR027417">
    <property type="entry name" value="P-loop_NTPase"/>
</dbReference>
<dbReference type="NCBIfam" id="TIGR00174">
    <property type="entry name" value="miaA"/>
    <property type="match status" value="1"/>
</dbReference>
<dbReference type="PANTHER" id="PTHR11088">
    <property type="entry name" value="TRNA DIMETHYLALLYLTRANSFERASE"/>
    <property type="match status" value="1"/>
</dbReference>
<dbReference type="PANTHER" id="PTHR11088:SF60">
    <property type="entry name" value="TRNA DIMETHYLALLYLTRANSFERASE"/>
    <property type="match status" value="1"/>
</dbReference>
<dbReference type="Pfam" id="PF01715">
    <property type="entry name" value="IPPT"/>
    <property type="match status" value="1"/>
</dbReference>
<dbReference type="SUPFAM" id="SSF52540">
    <property type="entry name" value="P-loop containing nucleoside triphosphate hydrolases"/>
    <property type="match status" value="2"/>
</dbReference>
<name>MIAA1_GEOUR</name>
<protein>
    <recommendedName>
        <fullName evidence="1">tRNA dimethylallyltransferase 1</fullName>
        <ecNumber evidence="1">2.5.1.75</ecNumber>
    </recommendedName>
    <alternativeName>
        <fullName evidence="1">Dimethylallyl diphosphate:tRNA dimethylallyltransferase 1</fullName>
        <shortName evidence="1">DMAPP:tRNA dimethylallyltransferase 1</shortName>
        <shortName evidence="1">DMATase 1</shortName>
    </alternativeName>
    <alternativeName>
        <fullName evidence="1">Isopentenyl-diphosphate:tRNA isopentenyltransferase 1</fullName>
        <shortName evidence="1">IPP transferase 1</shortName>
        <shortName evidence="1">IPPT 1</shortName>
        <shortName evidence="1">IPTase 1</shortName>
    </alternativeName>
</protein>
<evidence type="ECO:0000255" key="1">
    <source>
        <dbReference type="HAMAP-Rule" id="MF_00185"/>
    </source>
</evidence>
<keyword id="KW-0067">ATP-binding</keyword>
<keyword id="KW-0460">Magnesium</keyword>
<keyword id="KW-0547">Nucleotide-binding</keyword>
<keyword id="KW-1185">Reference proteome</keyword>
<keyword id="KW-0808">Transferase</keyword>
<keyword id="KW-0819">tRNA processing</keyword>
<proteinExistence type="inferred from homology"/>
<organism>
    <name type="scientific">Geotalea uraniireducens (strain Rf4)</name>
    <name type="common">Geobacter uraniireducens</name>
    <dbReference type="NCBI Taxonomy" id="351605"/>
    <lineage>
        <taxon>Bacteria</taxon>
        <taxon>Pseudomonadati</taxon>
        <taxon>Thermodesulfobacteriota</taxon>
        <taxon>Desulfuromonadia</taxon>
        <taxon>Geobacterales</taxon>
        <taxon>Geobacteraceae</taxon>
        <taxon>Geotalea</taxon>
    </lineage>
</organism>